<sequence length="394" mass="42146">MLKQIQKFLKLEAASGILLLVSALLAMIFANTDLNQLYFSFLQTEVAIKFGAFSIDKPLLMWVNDGFMAVFFILVGMEVKRELFEGSLSSYQKAIFPAVAALGGMIIPALVYWFINQNSPEYQQGWAIPMATDIAFALGIVALLSKQVPPALKVFLLALAIIDDLGAIIVIALFFSHEMSMQALTIASIAIVILVAMNRYKVTGLINYAIIGTILWASVLKSGVHATLAGVVIGFCIPLRGKNGEAPLHHLEHALAPWCSFAILPLFAFSNAGVSLEGMSLDKLASPLPLGVALGLIIGKPVGVFLFSYVAVLLGIAKVPEGINLKQIFAIAVLCGIGFTMSMFIAGLAFGEEDASESVLALARLGILMGTFVAAIIGYFLLKITTKPSLMKAA</sequence>
<keyword id="KW-0050">Antiport</keyword>
<keyword id="KW-0997">Cell inner membrane</keyword>
<keyword id="KW-1003">Cell membrane</keyword>
<keyword id="KW-0406">Ion transport</keyword>
<keyword id="KW-0472">Membrane</keyword>
<keyword id="KW-0915">Sodium</keyword>
<keyword id="KW-0739">Sodium transport</keyword>
<keyword id="KW-0812">Transmembrane</keyword>
<keyword id="KW-1133">Transmembrane helix</keyword>
<keyword id="KW-0813">Transport</keyword>
<comment type="function">
    <text evidence="1">Na(+)/H(+) antiporter that extrudes sodium in exchange for external protons.</text>
</comment>
<comment type="catalytic activity">
    <reaction evidence="1">
        <text>Na(+)(in) + 2 H(+)(out) = Na(+)(out) + 2 H(+)(in)</text>
        <dbReference type="Rhea" id="RHEA:29251"/>
        <dbReference type="ChEBI" id="CHEBI:15378"/>
        <dbReference type="ChEBI" id="CHEBI:29101"/>
    </reaction>
    <physiologicalReaction direction="left-to-right" evidence="1">
        <dbReference type="Rhea" id="RHEA:29252"/>
    </physiologicalReaction>
</comment>
<comment type="subcellular location">
    <subcellularLocation>
        <location evidence="1">Cell inner membrane</location>
        <topology evidence="1">Multi-pass membrane protein</topology>
    </subcellularLocation>
</comment>
<comment type="similarity">
    <text evidence="1">Belongs to the NhaA Na(+)/H(+) (TC 2.A.33) antiporter family.</text>
</comment>
<accession>B3H317</accession>
<name>NHAA_ACTP7</name>
<organism>
    <name type="scientific">Actinobacillus pleuropneumoniae serotype 7 (strain AP76)</name>
    <dbReference type="NCBI Taxonomy" id="537457"/>
    <lineage>
        <taxon>Bacteria</taxon>
        <taxon>Pseudomonadati</taxon>
        <taxon>Pseudomonadota</taxon>
        <taxon>Gammaproteobacteria</taxon>
        <taxon>Pasteurellales</taxon>
        <taxon>Pasteurellaceae</taxon>
        <taxon>Actinobacillus</taxon>
    </lineage>
</organism>
<proteinExistence type="inferred from homology"/>
<protein>
    <recommendedName>
        <fullName evidence="1">Na(+)/H(+) antiporter NhaA</fullName>
    </recommendedName>
    <alternativeName>
        <fullName evidence="1">Sodium/proton antiporter NhaA</fullName>
    </alternativeName>
</protein>
<feature type="chain" id="PRO_1000188431" description="Na(+)/H(+) antiporter NhaA">
    <location>
        <begin position="1"/>
        <end position="394"/>
    </location>
</feature>
<feature type="transmembrane region" description="Helical" evidence="1">
    <location>
        <begin position="11"/>
        <end position="31"/>
    </location>
</feature>
<feature type="transmembrane region" description="Helical" evidence="1">
    <location>
        <begin position="59"/>
        <end position="79"/>
    </location>
</feature>
<feature type="transmembrane region" description="Helical" evidence="1">
    <location>
        <begin position="95"/>
        <end position="115"/>
    </location>
</feature>
<feature type="transmembrane region" description="Helical" evidence="1">
    <location>
        <begin position="125"/>
        <end position="145"/>
    </location>
</feature>
<feature type="transmembrane region" description="Helical" evidence="1">
    <location>
        <begin position="155"/>
        <end position="175"/>
    </location>
</feature>
<feature type="transmembrane region" description="Helical" evidence="1">
    <location>
        <begin position="177"/>
        <end position="197"/>
    </location>
</feature>
<feature type="transmembrane region" description="Helical" evidence="1">
    <location>
        <begin position="203"/>
        <end position="220"/>
    </location>
</feature>
<feature type="transmembrane region" description="Helical" evidence="1">
    <location>
        <begin position="254"/>
        <end position="274"/>
    </location>
</feature>
<feature type="transmembrane region" description="Helical" evidence="1">
    <location>
        <begin position="296"/>
        <end position="316"/>
    </location>
</feature>
<feature type="transmembrane region" description="Helical" evidence="1">
    <location>
        <begin position="328"/>
        <end position="348"/>
    </location>
</feature>
<feature type="transmembrane region" description="Helical" evidence="1">
    <location>
        <begin position="365"/>
        <end position="385"/>
    </location>
</feature>
<evidence type="ECO:0000255" key="1">
    <source>
        <dbReference type="HAMAP-Rule" id="MF_01844"/>
    </source>
</evidence>
<gene>
    <name evidence="1" type="primary">nhaA</name>
    <name type="ordered locus">APP7_2035</name>
</gene>
<reference key="1">
    <citation type="submission" date="2008-06" db="EMBL/GenBank/DDBJ databases">
        <title>Genome and proteome analysis of A. pleuropneumoniae serotype 7.</title>
        <authorList>
            <person name="Linke B."/>
            <person name="Buettner F."/>
            <person name="Martinez-Arias R."/>
            <person name="Goesmann A."/>
            <person name="Baltes N."/>
            <person name="Tegetmeyer H."/>
            <person name="Singh M."/>
            <person name="Gerlach G.F."/>
        </authorList>
    </citation>
    <scope>NUCLEOTIDE SEQUENCE [LARGE SCALE GENOMIC DNA]</scope>
    <source>
        <strain>AP76</strain>
    </source>
</reference>
<dbReference type="EMBL" id="CP001091">
    <property type="protein sequence ID" value="ACE62687.1"/>
    <property type="molecule type" value="Genomic_DNA"/>
</dbReference>
<dbReference type="RefSeq" id="WP_005618398.1">
    <property type="nucleotide sequence ID" value="NC_010939.1"/>
</dbReference>
<dbReference type="SMR" id="B3H317"/>
<dbReference type="KEGG" id="apa:APP7_2035"/>
<dbReference type="HOGENOM" id="CLU_015803_1_0_6"/>
<dbReference type="Proteomes" id="UP000001226">
    <property type="component" value="Chromosome"/>
</dbReference>
<dbReference type="GO" id="GO:0005886">
    <property type="term" value="C:plasma membrane"/>
    <property type="evidence" value="ECO:0007669"/>
    <property type="project" value="UniProtKB-SubCell"/>
</dbReference>
<dbReference type="GO" id="GO:0015385">
    <property type="term" value="F:sodium:proton antiporter activity"/>
    <property type="evidence" value="ECO:0007669"/>
    <property type="project" value="TreeGrafter"/>
</dbReference>
<dbReference type="GO" id="GO:0006885">
    <property type="term" value="P:regulation of pH"/>
    <property type="evidence" value="ECO:0007669"/>
    <property type="project" value="InterPro"/>
</dbReference>
<dbReference type="Gene3D" id="1.20.1530.10">
    <property type="entry name" value="Na+/H+ antiporter like domain"/>
    <property type="match status" value="1"/>
</dbReference>
<dbReference type="HAMAP" id="MF_01844">
    <property type="entry name" value="NhaA"/>
    <property type="match status" value="1"/>
</dbReference>
<dbReference type="InterPro" id="IPR023171">
    <property type="entry name" value="Na/H_antiporter_dom_sf"/>
</dbReference>
<dbReference type="InterPro" id="IPR004670">
    <property type="entry name" value="NhaA"/>
</dbReference>
<dbReference type="NCBIfam" id="TIGR00773">
    <property type="entry name" value="NhaA"/>
    <property type="match status" value="1"/>
</dbReference>
<dbReference type="NCBIfam" id="NF007111">
    <property type="entry name" value="PRK09560.1"/>
    <property type="match status" value="1"/>
</dbReference>
<dbReference type="NCBIfam" id="NF007112">
    <property type="entry name" value="PRK09561.1"/>
    <property type="match status" value="1"/>
</dbReference>
<dbReference type="PANTHER" id="PTHR30341:SF0">
    <property type="entry name" value="NA(+)_H(+) ANTIPORTER NHAA"/>
    <property type="match status" value="1"/>
</dbReference>
<dbReference type="PANTHER" id="PTHR30341">
    <property type="entry name" value="SODIUM ION/PROTON ANTIPORTER NHAA-RELATED"/>
    <property type="match status" value="1"/>
</dbReference>
<dbReference type="Pfam" id="PF06965">
    <property type="entry name" value="Na_H_antiport_1"/>
    <property type="match status" value="1"/>
</dbReference>